<comment type="subcellular location">
    <subcellularLocation>
        <location evidence="5">Membrane</location>
        <topology evidence="5">Single-pass type II membrane protein</topology>
    </subcellularLocation>
</comment>
<comment type="alternative products">
    <event type="alternative splicing"/>
    <isoform>
        <id>Q68CQ7-1</id>
        <name>1</name>
        <sequence type="displayed"/>
    </isoform>
    <isoform>
        <id>Q68CQ7-2</id>
        <name>2</name>
        <sequence type="described" ref="VSP_025705 VSP_025706"/>
    </isoform>
</comment>
<comment type="similarity">
    <text evidence="5">Belongs to the glycosyltransferase 8 family.</text>
</comment>
<comment type="sequence caution" evidence="5">
    <conflict type="frameshift">
        <sequence resource="EMBL-CDS" id="AAQ13652"/>
    </conflict>
</comment>
<proteinExistence type="evidence at protein level"/>
<organism>
    <name type="scientific">Homo sapiens</name>
    <name type="common">Human</name>
    <dbReference type="NCBI Taxonomy" id="9606"/>
    <lineage>
        <taxon>Eukaryota</taxon>
        <taxon>Metazoa</taxon>
        <taxon>Chordata</taxon>
        <taxon>Craniata</taxon>
        <taxon>Vertebrata</taxon>
        <taxon>Euteleostomi</taxon>
        <taxon>Mammalia</taxon>
        <taxon>Eutheria</taxon>
        <taxon>Euarchontoglires</taxon>
        <taxon>Primates</taxon>
        <taxon>Haplorrhini</taxon>
        <taxon>Catarrhini</taxon>
        <taxon>Hominidae</taxon>
        <taxon>Homo</taxon>
    </lineage>
</organism>
<name>GL8D1_HUMAN</name>
<feature type="chain" id="PRO_0000288528" description="Glycosyltransferase 8 domain-containing protein 1">
    <location>
        <begin position="1"/>
        <end position="371"/>
    </location>
</feature>
<feature type="topological domain" description="Cytoplasmic" evidence="1">
    <location>
        <begin position="1"/>
        <end position="7"/>
    </location>
</feature>
<feature type="transmembrane region" description="Helical; Signal-anchor for type II membrane protein" evidence="1">
    <location>
        <begin position="8"/>
        <end position="28"/>
    </location>
</feature>
<feature type="topological domain" description="Lumenal" evidence="1">
    <location>
        <begin position="29"/>
        <end position="371"/>
    </location>
</feature>
<feature type="glycosylation site" description="N-linked (GlcNAc...) asparagine" evidence="2">
    <location>
        <position position="249"/>
    </location>
</feature>
<feature type="glycosylation site" description="N-linked (GlcNAc...) asparagine" evidence="1">
    <location>
        <position position="257"/>
    </location>
</feature>
<feature type="splice variant" id="VSP_025705" description="In isoform 2." evidence="4">
    <original>YNYIGYLDYKKERIRKLSMKASTCSFNPGVFVANLTEWKRQNIT</original>
    <variation>VNCLPNTPLPTILFNGKRLQIQGTLLLQFTLPNHFIPNLKPAFL</variation>
    <location>
        <begin position="216"/>
        <end position="259"/>
    </location>
</feature>
<feature type="splice variant" id="VSP_025706" description="In isoform 2." evidence="4">
    <location>
        <begin position="260"/>
        <end position="371"/>
    </location>
</feature>
<feature type="sequence variant" id="VAR_032443" description="In dbSNP:rs2276812." evidence="3">
    <original>R</original>
    <variation>H</variation>
    <location>
        <position position="210"/>
    </location>
</feature>
<feature type="sequence conflict" description="In Ref. 7; AAQ13652." evidence="5" ref="7">
    <original>F</original>
    <variation>C</variation>
    <location>
        <position position="50"/>
    </location>
</feature>
<feature type="sequence conflict" description="In Ref. 5; CAH18681." evidence="5" ref="5">
    <original>D</original>
    <variation>G</variation>
    <location>
        <position position="201"/>
    </location>
</feature>
<feature type="sequence conflict" description="In Ref. 7; AAQ13652." evidence="5" ref="7">
    <original>P</original>
    <variation>L</variation>
    <location>
        <position position="301"/>
    </location>
</feature>
<feature type="sequence conflict" description="In Ref. 7; AAQ13652." evidence="5" ref="7">
    <original>W</original>
    <variation>G</variation>
    <location>
        <position position="349"/>
    </location>
</feature>
<keyword id="KW-0025">Alternative splicing</keyword>
<keyword id="KW-0325">Glycoprotein</keyword>
<keyword id="KW-0328">Glycosyltransferase</keyword>
<keyword id="KW-0472">Membrane</keyword>
<keyword id="KW-1267">Proteomics identification</keyword>
<keyword id="KW-1185">Reference proteome</keyword>
<keyword id="KW-0735">Signal-anchor</keyword>
<keyword id="KW-0808">Transferase</keyword>
<keyword id="KW-0812">Transmembrane</keyword>
<keyword id="KW-1133">Transmembrane helix</keyword>
<sequence length="371" mass="41935">MSFRKVNIIILVLAVALFLLVLHHNFLSLSSLLRNEVTDSGIVGPQPIDFVPNALRHAVDGRQEEIPVVIAASEDRLGGAIAAINSIQHNTRSNVIFYIVTLNNTADHLRSWLNSDSLKSIRYKIVNFDPKLLEGKVKEDPDQGESMKPLTFARFYLPILVPSAKKAIYMDDDVIVQGDILALYNTALKPGHAAAFSEDCDSASTKVVIRGAGNQYNYIGYLDYKKERIRKLSMKASTCSFNPGVFVANLTEWKRQNITNQLEKWMKLNVEEGLYSRTLAGSITTPPLLIVFYQQHSTIDPMWNVRHLGSSAGKRYSPQFVKAAKLLHWNGHLKPWGRTASYTDVWEKWYIPDPTGKFNLIRRYTEISNIK</sequence>
<gene>
    <name type="primary">GLT8D1</name>
    <name type="synonym">GALA4A</name>
    <name type="ORF">AD-017</name>
    <name type="ORF">MSTP137</name>
    <name type="ORF">UNQ572/PRO1134</name>
</gene>
<protein>
    <recommendedName>
        <fullName>Glycosyltransferase 8 domain-containing protein 1</fullName>
        <ecNumber>2.4.1.-</ecNumber>
    </recommendedName>
</protein>
<evidence type="ECO:0000255" key="1"/>
<evidence type="ECO:0000269" key="2">
    <source>
    </source>
</evidence>
<evidence type="ECO:0000269" key="3">
    <source ref="7"/>
</evidence>
<evidence type="ECO:0000303" key="4">
    <source>
    </source>
</evidence>
<evidence type="ECO:0000305" key="5"/>
<dbReference type="EC" id="2.4.1.-"/>
<dbReference type="EMBL" id="AJ271710">
    <property type="protein sequence ID" value="CAC19666.1"/>
    <property type="molecule type" value="mRNA"/>
</dbReference>
<dbReference type="EMBL" id="AF157318">
    <property type="protein sequence ID" value="AAF67484.1"/>
    <property type="molecule type" value="mRNA"/>
</dbReference>
<dbReference type="EMBL" id="AY358579">
    <property type="protein sequence ID" value="AAQ88942.1"/>
    <property type="molecule type" value="mRNA"/>
</dbReference>
<dbReference type="EMBL" id="AK027517">
    <property type="protein sequence ID" value="BAB55170.1"/>
    <property type="molecule type" value="mRNA"/>
</dbReference>
<dbReference type="EMBL" id="AK075031">
    <property type="protein sequence ID" value="BAC11363.1"/>
    <property type="molecule type" value="mRNA"/>
</dbReference>
<dbReference type="EMBL" id="CR749821">
    <property type="protein sequence ID" value="CAH18681.1"/>
    <property type="molecule type" value="mRNA"/>
</dbReference>
<dbReference type="EMBL" id="BC119670">
    <property type="protein sequence ID" value="AAI19671.1"/>
    <property type="molecule type" value="mRNA"/>
</dbReference>
<dbReference type="EMBL" id="BC119671">
    <property type="protein sequence ID" value="AAI19672.1"/>
    <property type="molecule type" value="mRNA"/>
</dbReference>
<dbReference type="EMBL" id="AF175227">
    <property type="protein sequence ID" value="AAQ13652.1"/>
    <property type="status" value="ALT_FRAME"/>
    <property type="molecule type" value="mRNA"/>
</dbReference>
<dbReference type="CCDS" id="CCDS2862.1">
    <molecule id="Q68CQ7-1"/>
</dbReference>
<dbReference type="RefSeq" id="NP_001010983.1">
    <molecule id="Q68CQ7-1"/>
    <property type="nucleotide sequence ID" value="NM_001010983.3"/>
</dbReference>
<dbReference type="RefSeq" id="NP_001265209.1">
    <molecule id="Q68CQ7-1"/>
    <property type="nucleotide sequence ID" value="NM_001278280.2"/>
</dbReference>
<dbReference type="RefSeq" id="NP_001265210.1">
    <molecule id="Q68CQ7-1"/>
    <property type="nucleotide sequence ID" value="NM_001278281.2"/>
</dbReference>
<dbReference type="RefSeq" id="NP_060916.1">
    <molecule id="Q68CQ7-1"/>
    <property type="nucleotide sequence ID" value="NM_018446.4"/>
</dbReference>
<dbReference type="RefSeq" id="NP_690909.1">
    <molecule id="Q68CQ7-1"/>
    <property type="nucleotide sequence ID" value="NM_152932.3"/>
</dbReference>
<dbReference type="RefSeq" id="XP_016862346.1">
    <property type="nucleotide sequence ID" value="XM_017006857.1"/>
</dbReference>
<dbReference type="RefSeq" id="XP_016862347.1">
    <property type="nucleotide sequence ID" value="XM_017006858.1"/>
</dbReference>
<dbReference type="RefSeq" id="XP_016862348.1">
    <property type="nucleotide sequence ID" value="XM_017006859.1"/>
</dbReference>
<dbReference type="RefSeq" id="XP_047304521.1">
    <molecule id="Q68CQ7-1"/>
    <property type="nucleotide sequence ID" value="XM_047448565.1"/>
</dbReference>
<dbReference type="RefSeq" id="XP_047304522.1">
    <molecule id="Q68CQ7-1"/>
    <property type="nucleotide sequence ID" value="XM_047448566.1"/>
</dbReference>
<dbReference type="RefSeq" id="XP_047304523.1">
    <molecule id="Q68CQ7-1"/>
    <property type="nucleotide sequence ID" value="XM_047448567.1"/>
</dbReference>
<dbReference type="RefSeq" id="XP_047304524.1">
    <molecule id="Q68CQ7-1"/>
    <property type="nucleotide sequence ID" value="XM_047448568.1"/>
</dbReference>
<dbReference type="RefSeq" id="XP_047304525.1">
    <molecule id="Q68CQ7-1"/>
    <property type="nucleotide sequence ID" value="XM_047448569.1"/>
</dbReference>
<dbReference type="RefSeq" id="XP_047304526.1">
    <molecule id="Q68CQ7-1"/>
    <property type="nucleotide sequence ID" value="XM_047448570.1"/>
</dbReference>
<dbReference type="RefSeq" id="XP_047304527.1">
    <molecule id="Q68CQ7-1"/>
    <property type="nucleotide sequence ID" value="XM_047448571.1"/>
</dbReference>
<dbReference type="RefSeq" id="XP_047304528.1">
    <molecule id="Q68CQ7-1"/>
    <property type="nucleotide sequence ID" value="XM_047448572.1"/>
</dbReference>
<dbReference type="RefSeq" id="XP_047304529.1">
    <molecule id="Q68CQ7-1"/>
    <property type="nucleotide sequence ID" value="XM_047448573.1"/>
</dbReference>
<dbReference type="RefSeq" id="XP_054203218.1">
    <molecule id="Q68CQ7-1"/>
    <property type="nucleotide sequence ID" value="XM_054347243.1"/>
</dbReference>
<dbReference type="RefSeq" id="XP_054203219.1">
    <molecule id="Q68CQ7-1"/>
    <property type="nucleotide sequence ID" value="XM_054347244.1"/>
</dbReference>
<dbReference type="RefSeq" id="XP_054203220.1">
    <molecule id="Q68CQ7-1"/>
    <property type="nucleotide sequence ID" value="XM_054347245.1"/>
</dbReference>
<dbReference type="RefSeq" id="XP_054203221.1">
    <molecule id="Q68CQ7-1"/>
    <property type="nucleotide sequence ID" value="XM_054347246.1"/>
</dbReference>
<dbReference type="RefSeq" id="XP_054203222.1">
    <molecule id="Q68CQ7-1"/>
    <property type="nucleotide sequence ID" value="XM_054347247.1"/>
</dbReference>
<dbReference type="RefSeq" id="XP_054203223.1">
    <molecule id="Q68CQ7-1"/>
    <property type="nucleotide sequence ID" value="XM_054347248.1"/>
</dbReference>
<dbReference type="RefSeq" id="XP_054203224.1">
    <molecule id="Q68CQ7-1"/>
    <property type="nucleotide sequence ID" value="XM_054347249.1"/>
</dbReference>
<dbReference type="RefSeq" id="XP_054203225.1">
    <molecule id="Q68CQ7-1"/>
    <property type="nucleotide sequence ID" value="XM_054347250.1"/>
</dbReference>
<dbReference type="RefSeq" id="XP_054203226.1">
    <molecule id="Q68CQ7-1"/>
    <property type="nucleotide sequence ID" value="XM_054347251.1"/>
</dbReference>
<dbReference type="SMR" id="Q68CQ7"/>
<dbReference type="BioGRID" id="120935">
    <property type="interactions" value="95"/>
</dbReference>
<dbReference type="FunCoup" id="Q68CQ7">
    <property type="interactions" value="790"/>
</dbReference>
<dbReference type="IntAct" id="Q68CQ7">
    <property type="interactions" value="49"/>
</dbReference>
<dbReference type="MINT" id="Q68CQ7"/>
<dbReference type="STRING" id="9606.ENSP00000266014"/>
<dbReference type="CAZy" id="GT8">
    <property type="family name" value="Glycosyltransferase Family 8"/>
</dbReference>
<dbReference type="GlyConnect" id="1277">
    <property type="glycosylation" value="1 N-Linked glycan (1 site)"/>
</dbReference>
<dbReference type="GlyCosmos" id="Q68CQ7">
    <property type="glycosylation" value="5 sites, 2 glycans"/>
</dbReference>
<dbReference type="GlyGen" id="Q68CQ7">
    <property type="glycosylation" value="8 sites, 12 N-linked glycans (2 sites), 2 O-linked glycans (4 sites)"/>
</dbReference>
<dbReference type="iPTMnet" id="Q68CQ7"/>
<dbReference type="PhosphoSitePlus" id="Q68CQ7"/>
<dbReference type="BioMuta" id="GLT8D1"/>
<dbReference type="DMDM" id="152125896"/>
<dbReference type="jPOST" id="Q68CQ7"/>
<dbReference type="MassIVE" id="Q68CQ7"/>
<dbReference type="PaxDb" id="9606-ENSP00000266014"/>
<dbReference type="PeptideAtlas" id="Q68CQ7"/>
<dbReference type="ProteomicsDB" id="66021">
    <molecule id="Q68CQ7-1"/>
</dbReference>
<dbReference type="ProteomicsDB" id="66022">
    <molecule id="Q68CQ7-2"/>
</dbReference>
<dbReference type="Pumba" id="Q68CQ7"/>
<dbReference type="Antibodypedia" id="2243">
    <property type="antibodies" value="155 antibodies from 18 providers"/>
</dbReference>
<dbReference type="DNASU" id="55830"/>
<dbReference type="Ensembl" id="ENST00000266014.11">
    <molecule id="Q68CQ7-1"/>
    <property type="protein sequence ID" value="ENSP00000266014.5"/>
    <property type="gene ID" value="ENSG00000016864.19"/>
</dbReference>
<dbReference type="Ensembl" id="ENST00000394783.7">
    <molecule id="Q68CQ7-1"/>
    <property type="protein sequence ID" value="ENSP00000378263.3"/>
    <property type="gene ID" value="ENSG00000016864.19"/>
</dbReference>
<dbReference type="Ensembl" id="ENST00000478968.6">
    <molecule id="Q68CQ7-1"/>
    <property type="protein sequence ID" value="ENSP00000419612.2"/>
    <property type="gene ID" value="ENSG00000016864.19"/>
</dbReference>
<dbReference type="Ensembl" id="ENST00000491606.5">
    <molecule id="Q68CQ7-1"/>
    <property type="protein sequence ID" value="ENSP00000418853.1"/>
    <property type="gene ID" value="ENSG00000016864.19"/>
</dbReference>
<dbReference type="GeneID" id="55830"/>
<dbReference type="KEGG" id="hsa:55830"/>
<dbReference type="MANE-Select" id="ENST00000266014.11">
    <property type="protein sequence ID" value="ENSP00000266014.5"/>
    <property type="RefSeq nucleotide sequence ID" value="NM_018446.4"/>
    <property type="RefSeq protein sequence ID" value="NP_060916.1"/>
</dbReference>
<dbReference type="UCSC" id="uc003dfi.6">
    <molecule id="Q68CQ7-1"/>
    <property type="organism name" value="human"/>
</dbReference>
<dbReference type="AGR" id="HGNC:24870"/>
<dbReference type="CTD" id="55830"/>
<dbReference type="DisGeNET" id="55830"/>
<dbReference type="GeneCards" id="GLT8D1"/>
<dbReference type="HGNC" id="HGNC:24870">
    <property type="gene designation" value="GLT8D1"/>
</dbReference>
<dbReference type="HPA" id="ENSG00000016864">
    <property type="expression patterns" value="Low tissue specificity"/>
</dbReference>
<dbReference type="MalaCards" id="GLT8D1"/>
<dbReference type="MIM" id="618399">
    <property type="type" value="gene"/>
</dbReference>
<dbReference type="neXtProt" id="NX_Q68CQ7"/>
<dbReference type="OpenTargets" id="ENSG00000016864"/>
<dbReference type="Orphanet" id="803">
    <property type="disease" value="Amyotrophic lateral sclerosis"/>
</dbReference>
<dbReference type="PharmGKB" id="PA134947079"/>
<dbReference type="VEuPathDB" id="HostDB:ENSG00000016864"/>
<dbReference type="eggNOG" id="ENOG502QTN8">
    <property type="taxonomic scope" value="Eukaryota"/>
</dbReference>
<dbReference type="GeneTree" id="ENSGT00940000159273"/>
<dbReference type="HOGENOM" id="CLU_010770_0_0_1"/>
<dbReference type="InParanoid" id="Q68CQ7"/>
<dbReference type="OMA" id="YKQHSNI"/>
<dbReference type="OrthoDB" id="411524at2759"/>
<dbReference type="PAN-GO" id="Q68CQ7">
    <property type="GO annotations" value="1 GO annotation based on evolutionary models"/>
</dbReference>
<dbReference type="PhylomeDB" id="Q68CQ7"/>
<dbReference type="TreeFam" id="TF332433"/>
<dbReference type="PathwayCommons" id="Q68CQ7"/>
<dbReference type="SignaLink" id="Q68CQ7"/>
<dbReference type="BioGRID-ORCS" id="55830">
    <property type="hits" value="18 hits in 1154 CRISPR screens"/>
</dbReference>
<dbReference type="ChiTaRS" id="GLT8D1">
    <property type="organism name" value="human"/>
</dbReference>
<dbReference type="GenomeRNAi" id="55830"/>
<dbReference type="Pharos" id="Q68CQ7">
    <property type="development level" value="Tbio"/>
</dbReference>
<dbReference type="PRO" id="PR:Q68CQ7"/>
<dbReference type="Proteomes" id="UP000005640">
    <property type="component" value="Chromosome 3"/>
</dbReference>
<dbReference type="RNAct" id="Q68CQ7">
    <property type="molecule type" value="protein"/>
</dbReference>
<dbReference type="Bgee" id="ENSG00000016864">
    <property type="expression patterns" value="Expressed in pituitary gland and 205 other cell types or tissues"/>
</dbReference>
<dbReference type="ExpressionAtlas" id="Q68CQ7">
    <property type="expression patterns" value="baseline and differential"/>
</dbReference>
<dbReference type="GO" id="GO:0005794">
    <property type="term" value="C:Golgi apparatus"/>
    <property type="evidence" value="ECO:0000318"/>
    <property type="project" value="GO_Central"/>
</dbReference>
<dbReference type="GO" id="GO:0016020">
    <property type="term" value="C:membrane"/>
    <property type="evidence" value="ECO:0007005"/>
    <property type="project" value="UniProtKB"/>
</dbReference>
<dbReference type="GO" id="GO:0008194">
    <property type="term" value="F:UDP-glycosyltransferase activity"/>
    <property type="evidence" value="ECO:0007669"/>
    <property type="project" value="UniProtKB-ARBA"/>
</dbReference>
<dbReference type="CDD" id="cd06429">
    <property type="entry name" value="GT8_like_1"/>
    <property type="match status" value="1"/>
</dbReference>
<dbReference type="FunFam" id="3.90.550.10:FF:000069">
    <property type="entry name" value="Glycosyltransferase 8 domain-containing protein 1"/>
    <property type="match status" value="1"/>
</dbReference>
<dbReference type="Gene3D" id="3.90.550.10">
    <property type="entry name" value="Spore Coat Polysaccharide Biosynthesis Protein SpsA, Chain A"/>
    <property type="match status" value="1"/>
</dbReference>
<dbReference type="InterPro" id="IPR002495">
    <property type="entry name" value="Glyco_trans_8"/>
</dbReference>
<dbReference type="InterPro" id="IPR050748">
    <property type="entry name" value="Glycosyltrans_8_dom-fam"/>
</dbReference>
<dbReference type="InterPro" id="IPR029044">
    <property type="entry name" value="Nucleotide-diphossugar_trans"/>
</dbReference>
<dbReference type="PANTHER" id="PTHR13778">
    <property type="entry name" value="GLYCOSYLTRANSFERASE 8 DOMAIN-CONTAINING PROTEIN"/>
    <property type="match status" value="1"/>
</dbReference>
<dbReference type="PANTHER" id="PTHR13778:SF3">
    <property type="entry name" value="GLYCOSYLTRANSFERASE 8 DOMAIN-CONTAINING PROTEIN 1"/>
    <property type="match status" value="1"/>
</dbReference>
<dbReference type="Pfam" id="PF01501">
    <property type="entry name" value="Glyco_transf_8"/>
    <property type="match status" value="1"/>
</dbReference>
<dbReference type="SUPFAM" id="SSF53448">
    <property type="entry name" value="Nucleotide-diphospho-sugar transferases"/>
    <property type="match status" value="1"/>
</dbReference>
<reference key="1">
    <citation type="submission" date="2000-01" db="EMBL/GenBank/DDBJ databases">
        <title>gala4a, glycosyltransferase.</title>
        <authorList>
            <person name="Steffensen R."/>
            <person name="Bennett E.P."/>
        </authorList>
    </citation>
    <scope>NUCLEOTIDE SEQUENCE [MRNA] (ISOFORM 1)</scope>
</reference>
<reference key="2">
    <citation type="journal article" date="2000" name="Proc. Natl. Acad. Sci. U.S.A.">
        <title>Gene expression profiling in the human hypothalamus-pituitary-adrenal axis and full-length cDNA cloning.</title>
        <authorList>
            <person name="Hu R.-M."/>
            <person name="Han Z.-G."/>
            <person name="Song H.-D."/>
            <person name="Peng Y.-D."/>
            <person name="Huang Q.-H."/>
            <person name="Ren S.-X."/>
            <person name="Gu Y.-J."/>
            <person name="Huang C.-H."/>
            <person name="Li Y.-B."/>
            <person name="Jiang C.-L."/>
            <person name="Fu G."/>
            <person name="Zhang Q.-H."/>
            <person name="Gu B.-W."/>
            <person name="Dai M."/>
            <person name="Mao Y.-F."/>
            <person name="Gao G.-F."/>
            <person name="Rong R."/>
            <person name="Ye M."/>
            <person name="Zhou J."/>
            <person name="Xu S.-H."/>
            <person name="Gu J."/>
            <person name="Shi J.-X."/>
            <person name="Jin W.-R."/>
            <person name="Zhang C.-K."/>
            <person name="Wu T.-M."/>
            <person name="Huang G.-Y."/>
            <person name="Chen Z."/>
            <person name="Chen M.-D."/>
            <person name="Chen J.-L."/>
        </authorList>
    </citation>
    <scope>NUCLEOTIDE SEQUENCE [LARGE SCALE MRNA] (ISOFORM 1)</scope>
    <source>
        <tissue>Adrenal gland</tissue>
    </source>
</reference>
<reference key="3">
    <citation type="journal article" date="2003" name="Genome Res.">
        <title>The secreted protein discovery initiative (SPDI), a large-scale effort to identify novel human secreted and transmembrane proteins: a bioinformatics assessment.</title>
        <authorList>
            <person name="Clark H.F."/>
            <person name="Gurney A.L."/>
            <person name="Abaya E."/>
            <person name="Baker K."/>
            <person name="Baldwin D.T."/>
            <person name="Brush J."/>
            <person name="Chen J."/>
            <person name="Chow B."/>
            <person name="Chui C."/>
            <person name="Crowley C."/>
            <person name="Currell B."/>
            <person name="Deuel B."/>
            <person name="Dowd P."/>
            <person name="Eaton D."/>
            <person name="Foster J.S."/>
            <person name="Grimaldi C."/>
            <person name="Gu Q."/>
            <person name="Hass P.E."/>
            <person name="Heldens S."/>
            <person name="Huang A."/>
            <person name="Kim H.S."/>
            <person name="Klimowski L."/>
            <person name="Jin Y."/>
            <person name="Johnson S."/>
            <person name="Lee J."/>
            <person name="Lewis L."/>
            <person name="Liao D."/>
            <person name="Mark M.R."/>
            <person name="Robbie E."/>
            <person name="Sanchez C."/>
            <person name="Schoenfeld J."/>
            <person name="Seshagiri S."/>
            <person name="Simmons L."/>
            <person name="Singh J."/>
            <person name="Smith V."/>
            <person name="Stinson J."/>
            <person name="Vagts A."/>
            <person name="Vandlen R.L."/>
            <person name="Watanabe C."/>
            <person name="Wieand D."/>
            <person name="Woods K."/>
            <person name="Xie M.-H."/>
            <person name="Yansura D.G."/>
            <person name="Yi S."/>
            <person name="Yu G."/>
            <person name="Yuan J."/>
            <person name="Zhang M."/>
            <person name="Zhang Z."/>
            <person name="Goddard A.D."/>
            <person name="Wood W.I."/>
            <person name="Godowski P.J."/>
            <person name="Gray A.M."/>
        </authorList>
    </citation>
    <scope>NUCLEOTIDE SEQUENCE [LARGE SCALE MRNA] (ISOFORM 1)</scope>
</reference>
<reference key="4">
    <citation type="journal article" date="2004" name="Nat. Genet.">
        <title>Complete sequencing and characterization of 21,243 full-length human cDNAs.</title>
        <authorList>
            <person name="Ota T."/>
            <person name="Suzuki Y."/>
            <person name="Nishikawa T."/>
            <person name="Otsuki T."/>
            <person name="Sugiyama T."/>
            <person name="Irie R."/>
            <person name="Wakamatsu A."/>
            <person name="Hayashi K."/>
            <person name="Sato H."/>
            <person name="Nagai K."/>
            <person name="Kimura K."/>
            <person name="Makita H."/>
            <person name="Sekine M."/>
            <person name="Obayashi M."/>
            <person name="Nishi T."/>
            <person name="Shibahara T."/>
            <person name="Tanaka T."/>
            <person name="Ishii S."/>
            <person name="Yamamoto J."/>
            <person name="Saito K."/>
            <person name="Kawai Y."/>
            <person name="Isono Y."/>
            <person name="Nakamura Y."/>
            <person name="Nagahari K."/>
            <person name="Murakami K."/>
            <person name="Yasuda T."/>
            <person name="Iwayanagi T."/>
            <person name="Wagatsuma M."/>
            <person name="Shiratori A."/>
            <person name="Sudo H."/>
            <person name="Hosoiri T."/>
            <person name="Kaku Y."/>
            <person name="Kodaira H."/>
            <person name="Kondo H."/>
            <person name="Sugawara M."/>
            <person name="Takahashi M."/>
            <person name="Kanda K."/>
            <person name="Yokoi T."/>
            <person name="Furuya T."/>
            <person name="Kikkawa E."/>
            <person name="Omura Y."/>
            <person name="Abe K."/>
            <person name="Kamihara K."/>
            <person name="Katsuta N."/>
            <person name="Sato K."/>
            <person name="Tanikawa M."/>
            <person name="Yamazaki M."/>
            <person name="Ninomiya K."/>
            <person name="Ishibashi T."/>
            <person name="Yamashita H."/>
            <person name="Murakawa K."/>
            <person name="Fujimori K."/>
            <person name="Tanai H."/>
            <person name="Kimata M."/>
            <person name="Watanabe M."/>
            <person name="Hiraoka S."/>
            <person name="Chiba Y."/>
            <person name="Ishida S."/>
            <person name="Ono Y."/>
            <person name="Takiguchi S."/>
            <person name="Watanabe S."/>
            <person name="Yosida M."/>
            <person name="Hotuta T."/>
            <person name="Kusano J."/>
            <person name="Kanehori K."/>
            <person name="Takahashi-Fujii A."/>
            <person name="Hara H."/>
            <person name="Tanase T.-O."/>
            <person name="Nomura Y."/>
            <person name="Togiya S."/>
            <person name="Komai F."/>
            <person name="Hara R."/>
            <person name="Takeuchi K."/>
            <person name="Arita M."/>
            <person name="Imose N."/>
            <person name="Musashino K."/>
            <person name="Yuuki H."/>
            <person name="Oshima A."/>
            <person name="Sasaki N."/>
            <person name="Aotsuka S."/>
            <person name="Yoshikawa Y."/>
            <person name="Matsunawa H."/>
            <person name="Ichihara T."/>
            <person name="Shiohata N."/>
            <person name="Sano S."/>
            <person name="Moriya S."/>
            <person name="Momiyama H."/>
            <person name="Satoh N."/>
            <person name="Takami S."/>
            <person name="Terashima Y."/>
            <person name="Suzuki O."/>
            <person name="Nakagawa S."/>
            <person name="Senoh A."/>
            <person name="Mizoguchi H."/>
            <person name="Goto Y."/>
            <person name="Shimizu F."/>
            <person name="Wakebe H."/>
            <person name="Hishigaki H."/>
            <person name="Watanabe T."/>
            <person name="Sugiyama A."/>
            <person name="Takemoto M."/>
            <person name="Kawakami B."/>
            <person name="Yamazaki M."/>
            <person name="Watanabe K."/>
            <person name="Kumagai A."/>
            <person name="Itakura S."/>
            <person name="Fukuzumi Y."/>
            <person name="Fujimori Y."/>
            <person name="Komiyama M."/>
            <person name="Tashiro H."/>
            <person name="Tanigami A."/>
            <person name="Fujiwara T."/>
            <person name="Ono T."/>
            <person name="Yamada K."/>
            <person name="Fujii Y."/>
            <person name="Ozaki K."/>
            <person name="Hirao M."/>
            <person name="Ohmori Y."/>
            <person name="Kawabata A."/>
            <person name="Hikiji T."/>
            <person name="Kobatake N."/>
            <person name="Inagaki H."/>
            <person name="Ikema Y."/>
            <person name="Okamoto S."/>
            <person name="Okitani R."/>
            <person name="Kawakami T."/>
            <person name="Noguchi S."/>
            <person name="Itoh T."/>
            <person name="Shigeta K."/>
            <person name="Senba T."/>
            <person name="Matsumura K."/>
            <person name="Nakajima Y."/>
            <person name="Mizuno T."/>
            <person name="Morinaga M."/>
            <person name="Sasaki M."/>
            <person name="Togashi T."/>
            <person name="Oyama M."/>
            <person name="Hata H."/>
            <person name="Watanabe M."/>
            <person name="Komatsu T."/>
            <person name="Mizushima-Sugano J."/>
            <person name="Satoh T."/>
            <person name="Shirai Y."/>
            <person name="Takahashi Y."/>
            <person name="Nakagawa K."/>
            <person name="Okumura K."/>
            <person name="Nagase T."/>
            <person name="Nomura N."/>
            <person name="Kikuchi H."/>
            <person name="Masuho Y."/>
            <person name="Yamashita R."/>
            <person name="Nakai K."/>
            <person name="Yada T."/>
            <person name="Nakamura Y."/>
            <person name="Ohara O."/>
            <person name="Isogai T."/>
            <person name="Sugano S."/>
        </authorList>
    </citation>
    <scope>NUCLEOTIDE SEQUENCE [LARGE SCALE MRNA] (ISOFORMS 1 AND 2)</scope>
    <source>
        <tissue>Ovary</tissue>
        <tissue>Teratocarcinoma</tissue>
    </source>
</reference>
<reference key="5">
    <citation type="journal article" date="2007" name="BMC Genomics">
        <title>The full-ORF clone resource of the German cDNA consortium.</title>
        <authorList>
            <person name="Bechtel S."/>
            <person name="Rosenfelder H."/>
            <person name="Duda A."/>
            <person name="Schmidt C.P."/>
            <person name="Ernst U."/>
            <person name="Wellenreuther R."/>
            <person name="Mehrle A."/>
            <person name="Schuster C."/>
            <person name="Bahr A."/>
            <person name="Bloecker H."/>
            <person name="Heubner D."/>
            <person name="Hoerlein A."/>
            <person name="Michel G."/>
            <person name="Wedler H."/>
            <person name="Koehrer K."/>
            <person name="Ottenwaelder B."/>
            <person name="Poustka A."/>
            <person name="Wiemann S."/>
            <person name="Schupp I."/>
        </authorList>
    </citation>
    <scope>NUCLEOTIDE SEQUENCE [LARGE SCALE MRNA] (ISOFORM 1)</scope>
    <source>
        <tissue>Fetus</tissue>
    </source>
</reference>
<reference key="6">
    <citation type="journal article" date="2004" name="Genome Res.">
        <title>The status, quality, and expansion of the NIH full-length cDNA project: the Mammalian Gene Collection (MGC).</title>
        <authorList>
            <consortium name="The MGC Project Team"/>
        </authorList>
    </citation>
    <scope>NUCLEOTIDE SEQUENCE [LARGE SCALE MRNA] (ISOFORM 1)</scope>
</reference>
<reference key="7">
    <citation type="submission" date="1999-08" db="EMBL/GenBank/DDBJ databases">
        <authorList>
            <person name="Sheng H."/>
            <person name="Qin B.M."/>
            <person name="Liu Y.Q."/>
            <person name="Zhao B."/>
            <person name="Liu B."/>
            <person name="Wang X.Y."/>
            <person name="Hui R.T."/>
        </authorList>
    </citation>
    <scope>NUCLEOTIDE SEQUENCE [LARGE SCALE MRNA] (ISOFORM 1)</scope>
    <scope>VARIANT HIS-210</scope>
    <source>
        <tissue>Aorta</tissue>
    </source>
</reference>
<reference key="8">
    <citation type="journal article" date="2009" name="J. Proteome Res.">
        <title>Glycoproteomics analysis of human liver tissue by combination of multiple enzyme digestion and hydrazide chemistry.</title>
        <authorList>
            <person name="Chen R."/>
            <person name="Jiang X."/>
            <person name="Sun D."/>
            <person name="Han G."/>
            <person name="Wang F."/>
            <person name="Ye M."/>
            <person name="Wang L."/>
            <person name="Zou H."/>
        </authorList>
    </citation>
    <scope>GLYCOSYLATION [LARGE SCALE ANALYSIS] AT ASN-249</scope>
    <source>
        <tissue>Liver</tissue>
    </source>
</reference>
<reference key="9">
    <citation type="journal article" date="2014" name="J. Proteomics">
        <title>An enzyme assisted RP-RPLC approach for in-depth analysis of human liver phosphoproteome.</title>
        <authorList>
            <person name="Bian Y."/>
            <person name="Song C."/>
            <person name="Cheng K."/>
            <person name="Dong M."/>
            <person name="Wang F."/>
            <person name="Huang J."/>
            <person name="Sun D."/>
            <person name="Wang L."/>
            <person name="Ye M."/>
            <person name="Zou H."/>
        </authorList>
    </citation>
    <scope>IDENTIFICATION BY MASS SPECTROMETRY [LARGE SCALE ANALYSIS]</scope>
    <source>
        <tissue>Liver</tissue>
    </source>
</reference>
<accession>Q68CQ7</accession>
<accession>Q7Z4D1</accession>
<accession>Q8N2J6</accession>
<accession>Q9P0I5</accession>